<organism>
    <name type="scientific">Rattus norvegicus</name>
    <name type="common">Rat</name>
    <dbReference type="NCBI Taxonomy" id="10116"/>
    <lineage>
        <taxon>Eukaryota</taxon>
        <taxon>Metazoa</taxon>
        <taxon>Chordata</taxon>
        <taxon>Craniata</taxon>
        <taxon>Vertebrata</taxon>
        <taxon>Euteleostomi</taxon>
        <taxon>Mammalia</taxon>
        <taxon>Eutheria</taxon>
        <taxon>Euarchontoglires</taxon>
        <taxon>Glires</taxon>
        <taxon>Rodentia</taxon>
        <taxon>Myomorpha</taxon>
        <taxon>Muroidea</taxon>
        <taxon>Muridae</taxon>
        <taxon>Murinae</taxon>
        <taxon>Rattus</taxon>
    </lineage>
</organism>
<dbReference type="EMBL" id="M14105">
    <property type="protein sequence ID" value="AAA98781.1"/>
    <property type="molecule type" value="Genomic_DNA"/>
</dbReference>
<dbReference type="EMBL" id="M14104">
    <property type="protein sequence ID" value="AAA98781.1"/>
    <property type="status" value="JOINED"/>
    <property type="molecule type" value="Genomic_DNA"/>
</dbReference>
<dbReference type="EMBL" id="BC088159">
    <property type="protein sequence ID" value="AAH88159.1"/>
    <property type="molecule type" value="mRNA"/>
</dbReference>
<dbReference type="PIR" id="B24791">
    <property type="entry name" value="LNRTMA"/>
</dbReference>
<dbReference type="RefSeq" id="NP_036731.2">
    <property type="nucleotide sequence ID" value="NM_012599.2"/>
</dbReference>
<dbReference type="PDB" id="1AFA">
    <property type="method" value="X-ray"/>
    <property type="resolution" value="2.00 A"/>
    <property type="chains" value="1/2/3=90-238"/>
</dbReference>
<dbReference type="PDB" id="1AFB">
    <property type="method" value="X-ray"/>
    <property type="resolution" value="1.90 A"/>
    <property type="chains" value="1/2/3=90-238"/>
</dbReference>
<dbReference type="PDB" id="1AFD">
    <property type="method" value="X-ray"/>
    <property type="resolution" value="2.00 A"/>
    <property type="chains" value="1/2/3=90-238"/>
</dbReference>
<dbReference type="PDB" id="1BCH">
    <property type="method" value="X-ray"/>
    <property type="resolution" value="2.00 A"/>
    <property type="chains" value="1/2/3=90-238"/>
</dbReference>
<dbReference type="PDB" id="1BCJ">
    <property type="method" value="X-ray"/>
    <property type="resolution" value="2.10 A"/>
    <property type="chains" value="1/2/3=90-238"/>
</dbReference>
<dbReference type="PDB" id="1BUU">
    <property type="method" value="X-ray"/>
    <property type="resolution" value="1.90 A"/>
    <property type="chains" value="A=75-238"/>
</dbReference>
<dbReference type="PDB" id="1FIF">
    <property type="method" value="X-ray"/>
    <property type="resolution" value="1.95 A"/>
    <property type="chains" value="A/B/C=90-238"/>
</dbReference>
<dbReference type="PDB" id="1FIH">
    <property type="method" value="X-ray"/>
    <property type="resolution" value="1.95 A"/>
    <property type="chains" value="A/B/C=90-238"/>
</dbReference>
<dbReference type="PDB" id="1KMB">
    <property type="method" value="X-ray"/>
    <property type="resolution" value="2.10 A"/>
    <property type="chains" value="1/2/3=90-238"/>
</dbReference>
<dbReference type="PDB" id="1KWT">
    <property type="method" value="X-ray"/>
    <property type="resolution" value="1.95 A"/>
    <property type="chains" value="A/B/C=90-238"/>
</dbReference>
<dbReference type="PDB" id="1KWU">
    <property type="method" value="X-ray"/>
    <property type="resolution" value="1.95 A"/>
    <property type="chains" value="A/B/C=90-238"/>
</dbReference>
<dbReference type="PDB" id="1KWV">
    <property type="method" value="X-ray"/>
    <property type="resolution" value="2.00 A"/>
    <property type="chains" value="A/B/C=90-238"/>
</dbReference>
<dbReference type="PDB" id="1KWW">
    <property type="method" value="X-ray"/>
    <property type="resolution" value="1.90 A"/>
    <property type="chains" value="A/B/C=90-238"/>
</dbReference>
<dbReference type="PDB" id="1KWX">
    <property type="method" value="X-ray"/>
    <property type="resolution" value="2.00 A"/>
    <property type="chains" value="A/B/C=90-238"/>
</dbReference>
<dbReference type="PDB" id="1KWY">
    <property type="method" value="X-ray"/>
    <property type="resolution" value="2.00 A"/>
    <property type="chains" value="A/B/C=90-238"/>
</dbReference>
<dbReference type="PDB" id="1KWZ">
    <property type="method" value="X-ray"/>
    <property type="resolution" value="1.90 A"/>
    <property type="chains" value="A/B/C=90-238"/>
</dbReference>
<dbReference type="PDB" id="1KX0">
    <property type="method" value="X-ray"/>
    <property type="resolution" value="2.00 A"/>
    <property type="chains" value="A/B/C=90-238"/>
</dbReference>
<dbReference type="PDB" id="1KX1">
    <property type="method" value="X-ray"/>
    <property type="resolution" value="2.80 A"/>
    <property type="chains" value="A/B/C/D/E/F=90-238"/>
</dbReference>
<dbReference type="PDB" id="1MSB">
    <property type="method" value="X-ray"/>
    <property type="resolution" value="2.30 A"/>
    <property type="chains" value="A/B=124-238"/>
</dbReference>
<dbReference type="PDB" id="1RTM">
    <property type="method" value="X-ray"/>
    <property type="resolution" value="1.80 A"/>
    <property type="chains" value="1/2/3=90-238"/>
</dbReference>
<dbReference type="PDB" id="1YTT">
    <property type="method" value="X-ray"/>
    <property type="resolution" value="1.80 A"/>
    <property type="chains" value="A/B=124-238"/>
</dbReference>
<dbReference type="PDB" id="2KMB">
    <property type="method" value="X-ray"/>
    <property type="resolution" value="2.00 A"/>
    <property type="chains" value="1/2/3=90-238"/>
</dbReference>
<dbReference type="PDB" id="2MSB">
    <property type="method" value="X-ray"/>
    <property type="resolution" value="1.70 A"/>
    <property type="chains" value="A/B=124-238"/>
</dbReference>
<dbReference type="PDB" id="3KMB">
    <property type="method" value="X-ray"/>
    <property type="resolution" value="1.95 A"/>
    <property type="chains" value="1/2/3=90-238"/>
</dbReference>
<dbReference type="PDB" id="4KMB">
    <property type="method" value="X-ray"/>
    <property type="resolution" value="2.00 A"/>
    <property type="chains" value="1/2/3=90-238"/>
</dbReference>
<dbReference type="PDBsum" id="1AFA"/>
<dbReference type="PDBsum" id="1AFB"/>
<dbReference type="PDBsum" id="1AFD"/>
<dbReference type="PDBsum" id="1BCH"/>
<dbReference type="PDBsum" id="1BCJ"/>
<dbReference type="PDBsum" id="1BUU"/>
<dbReference type="PDBsum" id="1FIF"/>
<dbReference type="PDBsum" id="1FIH"/>
<dbReference type="PDBsum" id="1KMB"/>
<dbReference type="PDBsum" id="1KWT"/>
<dbReference type="PDBsum" id="1KWU"/>
<dbReference type="PDBsum" id="1KWV"/>
<dbReference type="PDBsum" id="1KWW"/>
<dbReference type="PDBsum" id="1KWX"/>
<dbReference type="PDBsum" id="1KWY"/>
<dbReference type="PDBsum" id="1KWZ"/>
<dbReference type="PDBsum" id="1KX0"/>
<dbReference type="PDBsum" id="1KX1"/>
<dbReference type="PDBsum" id="1MSB"/>
<dbReference type="PDBsum" id="1RTM"/>
<dbReference type="PDBsum" id="1YTT"/>
<dbReference type="PDBsum" id="2KMB"/>
<dbReference type="PDBsum" id="2MSB"/>
<dbReference type="PDBsum" id="3KMB"/>
<dbReference type="PDBsum" id="4KMB"/>
<dbReference type="SMR" id="P19999"/>
<dbReference type="FunCoup" id="P19999">
    <property type="interactions" value="133"/>
</dbReference>
<dbReference type="STRING" id="10116.ENSRNOP00000015723"/>
<dbReference type="UniLectin" id="P19999"/>
<dbReference type="GlyCosmos" id="P19999">
    <property type="glycosylation" value="4 sites, No reported glycans"/>
</dbReference>
<dbReference type="GlyGen" id="P19999">
    <property type="glycosylation" value="4 sites"/>
</dbReference>
<dbReference type="iPTMnet" id="P19999"/>
<dbReference type="PhosphoSitePlus" id="P19999"/>
<dbReference type="PaxDb" id="10116-ENSRNOP00000015723"/>
<dbReference type="Ensembl" id="ENSRNOT00000015723.7">
    <property type="protein sequence ID" value="ENSRNOP00000015723.2"/>
    <property type="gene ID" value="ENSRNOG00000011706.7"/>
</dbReference>
<dbReference type="GeneID" id="24548"/>
<dbReference type="KEGG" id="rno:24548"/>
<dbReference type="UCSC" id="RGD:3055">
    <property type="organism name" value="rat"/>
</dbReference>
<dbReference type="AGR" id="RGD:3055"/>
<dbReference type="CTD" id="17194"/>
<dbReference type="RGD" id="3055">
    <property type="gene designation" value="Mbl1"/>
</dbReference>
<dbReference type="eggNOG" id="KOG4297">
    <property type="taxonomic scope" value="Eukaryota"/>
</dbReference>
<dbReference type="GeneTree" id="ENSGT00940000154368"/>
<dbReference type="HOGENOM" id="CLU_049894_3_0_1"/>
<dbReference type="InParanoid" id="P19999"/>
<dbReference type="OMA" id="ACSVITC"/>
<dbReference type="OrthoDB" id="10255512at2759"/>
<dbReference type="PhylomeDB" id="P19999"/>
<dbReference type="TreeFam" id="TF330481"/>
<dbReference type="EvolutionaryTrace" id="P19999"/>
<dbReference type="PRO" id="PR:P19999"/>
<dbReference type="Proteomes" id="UP000002494">
    <property type="component" value="Chromosome 16"/>
</dbReference>
<dbReference type="Bgee" id="ENSRNOG00000011706">
    <property type="expression patterns" value="Expressed in liver and 5 other cell types or tissues"/>
</dbReference>
<dbReference type="GO" id="GO:0005581">
    <property type="term" value="C:collagen trimer"/>
    <property type="evidence" value="ECO:0007669"/>
    <property type="project" value="UniProtKB-KW"/>
</dbReference>
<dbReference type="GO" id="GO:0005615">
    <property type="term" value="C:extracellular space"/>
    <property type="evidence" value="ECO:0000314"/>
    <property type="project" value="RGD"/>
</dbReference>
<dbReference type="GO" id="GO:0005771">
    <property type="term" value="C:multivesicular body"/>
    <property type="evidence" value="ECO:0000318"/>
    <property type="project" value="GO_Central"/>
</dbReference>
<dbReference type="GO" id="GO:0005509">
    <property type="term" value="F:calcium ion binding"/>
    <property type="evidence" value="ECO:0000314"/>
    <property type="project" value="UniProtKB"/>
</dbReference>
<dbReference type="GO" id="GO:0120153">
    <property type="term" value="F:calcium-dependent carbohydrate binding"/>
    <property type="evidence" value="ECO:0000314"/>
    <property type="project" value="UniProtKB"/>
</dbReference>
<dbReference type="GO" id="GO:0048306">
    <property type="term" value="F:calcium-dependent protein binding"/>
    <property type="evidence" value="ECO:0000353"/>
    <property type="project" value="UniProtKB"/>
</dbReference>
<dbReference type="GO" id="GO:0005537">
    <property type="term" value="F:D-mannose binding"/>
    <property type="evidence" value="ECO:0000314"/>
    <property type="project" value="UniProtKB"/>
</dbReference>
<dbReference type="GO" id="GO:0042802">
    <property type="term" value="F:identical protein binding"/>
    <property type="evidence" value="ECO:0000353"/>
    <property type="project" value="RGD"/>
</dbReference>
<dbReference type="GO" id="GO:0070492">
    <property type="term" value="F:oligosaccharide binding"/>
    <property type="evidence" value="ECO:0000314"/>
    <property type="project" value="UniProtKB"/>
</dbReference>
<dbReference type="GO" id="GO:0070273">
    <property type="term" value="F:phosphatidylinositol-4-phosphate binding"/>
    <property type="evidence" value="ECO:0000314"/>
    <property type="project" value="RGD"/>
</dbReference>
<dbReference type="GO" id="GO:0030247">
    <property type="term" value="F:polysaccharide binding"/>
    <property type="evidence" value="ECO:0000314"/>
    <property type="project" value="RGD"/>
</dbReference>
<dbReference type="GO" id="GO:0002020">
    <property type="term" value="F:protease binding"/>
    <property type="evidence" value="ECO:0000314"/>
    <property type="project" value="RGD"/>
</dbReference>
<dbReference type="GO" id="GO:0042803">
    <property type="term" value="F:protein homodimerization activity"/>
    <property type="evidence" value="ECO:0000353"/>
    <property type="project" value="UniProtKB"/>
</dbReference>
<dbReference type="GO" id="GO:0006958">
    <property type="term" value="P:complement activation, classical pathway"/>
    <property type="evidence" value="ECO:0007669"/>
    <property type="project" value="UniProtKB-KW"/>
</dbReference>
<dbReference type="GO" id="GO:0001867">
    <property type="term" value="P:complement activation, lectin pathway"/>
    <property type="evidence" value="ECO:0000314"/>
    <property type="project" value="RGD"/>
</dbReference>
<dbReference type="GO" id="GO:0050830">
    <property type="term" value="P:defense response to Gram-positive bacterium"/>
    <property type="evidence" value="ECO:0000266"/>
    <property type="project" value="RGD"/>
</dbReference>
<dbReference type="GO" id="GO:0051873">
    <property type="term" value="P:killing by host of symbiont cells"/>
    <property type="evidence" value="ECO:0000266"/>
    <property type="project" value="RGD"/>
</dbReference>
<dbReference type="GO" id="GO:0050766">
    <property type="term" value="P:positive regulation of phagocytosis"/>
    <property type="evidence" value="ECO:0000266"/>
    <property type="project" value="RGD"/>
</dbReference>
<dbReference type="GO" id="GO:0070207">
    <property type="term" value="P:protein homotrimerization"/>
    <property type="evidence" value="ECO:0000314"/>
    <property type="project" value="UniProtKB"/>
</dbReference>
<dbReference type="GO" id="GO:0043129">
    <property type="term" value="P:surfactant homeostasis"/>
    <property type="evidence" value="ECO:0000318"/>
    <property type="project" value="GO_Central"/>
</dbReference>
<dbReference type="CDD" id="cd03591">
    <property type="entry name" value="CLECT_collectin_like"/>
    <property type="match status" value="1"/>
</dbReference>
<dbReference type="FunFam" id="3.10.100.10:FF:000088">
    <property type="entry name" value="Mannose-binding protein A"/>
    <property type="match status" value="1"/>
</dbReference>
<dbReference type="Gene3D" id="3.10.100.10">
    <property type="entry name" value="Mannose-Binding Protein A, subunit A"/>
    <property type="match status" value="1"/>
</dbReference>
<dbReference type="InterPro" id="IPR001304">
    <property type="entry name" value="C-type_lectin-like"/>
</dbReference>
<dbReference type="InterPro" id="IPR016186">
    <property type="entry name" value="C-type_lectin-like/link_sf"/>
</dbReference>
<dbReference type="InterPro" id="IPR018378">
    <property type="entry name" value="C-type_lectin_CS"/>
</dbReference>
<dbReference type="InterPro" id="IPR051077">
    <property type="entry name" value="Ca-dependent_lectin"/>
</dbReference>
<dbReference type="InterPro" id="IPR008160">
    <property type="entry name" value="Collagen"/>
</dbReference>
<dbReference type="InterPro" id="IPR033990">
    <property type="entry name" value="Collectin_CTLD"/>
</dbReference>
<dbReference type="InterPro" id="IPR016187">
    <property type="entry name" value="CTDL_fold"/>
</dbReference>
<dbReference type="PANTHER" id="PTHR24024:SF35">
    <property type="entry name" value="MANNOSE-BINDING PROTEIN A"/>
    <property type="match status" value="1"/>
</dbReference>
<dbReference type="PANTHER" id="PTHR24024">
    <property type="entry name" value="PULMONARY SURFACTANT-ASSOCIATED PROTEIN A"/>
    <property type="match status" value="1"/>
</dbReference>
<dbReference type="Pfam" id="PF01391">
    <property type="entry name" value="Collagen"/>
    <property type="match status" value="1"/>
</dbReference>
<dbReference type="Pfam" id="PF00059">
    <property type="entry name" value="Lectin_C"/>
    <property type="match status" value="1"/>
</dbReference>
<dbReference type="SMART" id="SM00034">
    <property type="entry name" value="CLECT"/>
    <property type="match status" value="1"/>
</dbReference>
<dbReference type="SUPFAM" id="SSF56436">
    <property type="entry name" value="C-type lectin-like"/>
    <property type="match status" value="1"/>
</dbReference>
<dbReference type="SUPFAM" id="SSF57944">
    <property type="entry name" value="Triple coiled coil domain of C-type lectins"/>
    <property type="match status" value="1"/>
</dbReference>
<dbReference type="PROSITE" id="PS00615">
    <property type="entry name" value="C_TYPE_LECTIN_1"/>
    <property type="match status" value="1"/>
</dbReference>
<dbReference type="PROSITE" id="PS50041">
    <property type="entry name" value="C_TYPE_LECTIN_2"/>
    <property type="match status" value="1"/>
</dbReference>
<accession>P19999</accession>
<reference key="1">
    <citation type="journal article" date="1986" name="J. Biol. Chem.">
        <title>Mannose-binding proteins isolated from rat liver contain carbohydrate-recognition domains linked to collagenous tails. Complete primary structures and homology with pulmonary surfactant apoprotein.</title>
        <authorList>
            <person name="Drickamer K."/>
            <person name="Dordal M.S."/>
            <person name="Reynolds L."/>
        </authorList>
    </citation>
    <scope>NUCLEOTIDE SEQUENCE [GENOMIC DNA]</scope>
    <scope>PARTIAL PROTEIN SEQUENCE</scope>
    <source>
        <tissue>Liver</tissue>
    </source>
</reference>
<reference key="2">
    <citation type="journal article" date="1987" name="J. Biol. Chem.">
        <title>Exon structure of a mannose-binding protein gene reflects its evolutionary relationship to the asialoglycoprotein receptor and nonfibrillar collagens.</title>
        <authorList>
            <person name="Drickamer K."/>
            <person name="McCreary V."/>
        </authorList>
    </citation>
    <scope>NUCLEOTIDE SEQUENCE [GENOMIC DNA]</scope>
    <source>
        <tissue>Liver</tissue>
    </source>
</reference>
<reference key="3">
    <citation type="journal article" date="2004" name="Genome Res.">
        <title>The status, quality, and expansion of the NIH full-length cDNA project: the Mammalian Gene Collection (MGC).</title>
        <authorList>
            <consortium name="The MGC Project Team"/>
        </authorList>
    </citation>
    <scope>NUCLEOTIDE SEQUENCE [LARGE SCALE MRNA]</scope>
    <source>
        <tissue>Liver</tissue>
    </source>
</reference>
<reference key="4">
    <citation type="journal article" date="1987" name="J. Biol. Chem.">
        <title>Serum lectin with known structure activates complement through the classical pathway.</title>
        <authorList>
            <person name="Ikeda K."/>
            <person name="Sannoh T."/>
            <person name="Kawasaki N."/>
            <person name="Kawasaki T."/>
            <person name="Yamashina I."/>
        </authorList>
    </citation>
    <scope>PROTEIN SEQUENCE OF 18-42</scope>
    <scope>FUNCTION</scope>
    <scope>SUBCELLULAR LOCATION</scope>
    <scope>TISSUE SPECIFICITY</scope>
</reference>
<reference key="5">
    <citation type="journal article" date="2000" name="J. Biol. Chem.">
        <title>Interaction of mannose-binding protein with associated serine proteases: effects of naturally occurring mutations.</title>
        <authorList>
            <person name="Wallis R."/>
            <person name="Dodd R.B."/>
        </authorList>
    </citation>
    <scope>INTERACTION WITH MASP1 AND MASP2</scope>
    <source>
        <tissue>Liver</tissue>
    </source>
</reference>
<reference key="6">
    <citation type="journal article" date="2000" name="J. Immunol.">
        <title>Impaired secretion of rat mannose-binding protein resulting from mutations in the collagen-like domain.</title>
        <authorList>
            <person name="Heise C.T."/>
            <person name="Nicholls J.R."/>
            <person name="Leamy C.E."/>
            <person name="Wallis R."/>
        </authorList>
    </citation>
    <scope>SUBCELLULAR LOCATION</scope>
    <scope>GLYCOSYLATION</scope>
    <scope>OLIGOMERIZATION</scope>
    <scope>MUTAGENESIS OF ARG-40; GLY-42; LYS-44; GLY-45 AND LYS-47</scope>
    <scope>HYDROXYLATION AT LYS-44 AND LYS-47</scope>
</reference>
<reference key="7">
    <citation type="journal article" date="2014" name="PLoS ONE">
        <title>Lysyl hydroxylase 3 modifies lysine residues to facilitate oligomerization of mannan-binding lectin.</title>
        <authorList>
            <person name="Risteli M."/>
            <person name="Ruotsalainen H."/>
            <person name="Bergmann U."/>
            <person name="Venkatraman Girija U."/>
            <person name="Wallis R."/>
            <person name="Myllylae R."/>
        </authorList>
    </citation>
    <scope>SUBUNIT</scope>
    <scope>SUBCELLULAR LOCATION</scope>
    <scope>HYDROXYLATION AT LYS-44; LYS-47; PRO-50; LYS-79 AND LYS-82</scope>
    <scope>GLYCOSYLATION</scope>
    <scope>IDENTIFICATION BY MASS SPECTROMETRY</scope>
</reference>
<reference evidence="35" key="8">
    <citation type="journal article" date="1991" name="Science">
        <title>Structure of the calcium-dependent lectin domain from a rat mannose-binding protein determined by MAD phasing.</title>
        <authorList>
            <person name="Weis W.I."/>
            <person name="Kahn R."/>
            <person name="Fourme R."/>
            <person name="Drickamer K."/>
            <person name="Hendrickson W.A."/>
        </authorList>
    </citation>
    <scope>X-RAY CRYSTALLOGRAPHY (2.30 ANGSTROMS) OF 124-238</scope>
    <scope>DISULFIDE BONDS</scope>
</reference>
<reference evidence="39" key="9">
    <citation type="journal article" date="1992" name="Nature">
        <title>Structure of a C-type mannose-binding protein complexed with an oligosaccharide.</title>
        <authorList>
            <person name="Weis W.I."/>
            <person name="Drickamer K."/>
            <person name="Hendrickson W.A."/>
        </authorList>
    </citation>
    <scope>X-RAY CRYSTALLOGRAPHY (1.70 ANGSTROMS) OF 124-238 IN COMPLEX WITH CALCIUM AND CARBOHYDRATE</scope>
    <scope>FUNCTION</scope>
    <scope>DISULFIDE BONDS</scope>
</reference>
<reference evidence="36" key="10">
    <citation type="journal article" date="1994" name="Structure">
        <title>Trimeric structure of a C-type mannose-binding protein.</title>
        <authorList>
            <person name="Weis W.I."/>
            <person name="Drickamer K."/>
        </authorList>
    </citation>
    <scope>X-RAY CRYSTALLOGRAPHY (1.80 ANGSTROMS) OF 90-238 IN COMPLEX WITH CALCIUM</scope>
    <scope>SUBUNIT</scope>
    <scope>DOMAIN</scope>
    <scope>DISULFIDE BONDS</scope>
</reference>
<reference evidence="25 38 40 41" key="11">
    <citation type="journal article" date="1997" name="Biochemistry">
        <title>Structure of a selectin-like mutant of mannose-binding protein complexed with sialylated and sulfated Lewis(x) oligosaccharides.</title>
        <authorList>
            <person name="Ng K.K."/>
            <person name="Weis W.I."/>
        </authorList>
    </citation>
    <scope>X-RAY CRYSTALLOGRAPHY (1.95 ANGSTROMS) OF 90-238 OF MUTANT 228-LYS--LYS-230 IN COMPLEXES WITH CALCIUM AND CARBOHYDRATE</scope>
    <scope>FUNCTION</scope>
    <scope>SUBUNIT</scope>
    <scope>DOMAIN</scope>
    <scope>DISULFIDE BONDS</scope>
    <scope>MUTAGENESIS OF 228-ALA--HIS-230</scope>
</reference>
<reference evidence="22" key="12">
    <citation type="journal article" date="1998" name="Biochemistry">
        <title>Ca2+-dependent structural changes in C-type mannose-binding proteins.</title>
        <authorList>
            <person name="Ng K.K.-S."/>
            <person name="Park-Snyder S."/>
            <person name="Weis W.I."/>
        </authorList>
    </citation>
    <scope>X-RAY CRYSTALLOGRAPHY (1.90 ANGSTROMS) OF 75-238</scope>
    <scope>DISULFIDE BONDS</scope>
</reference>
<reference evidence="26 27 28 29 30 31 32 33 34" key="13">
    <citation type="journal article" date="2002" name="J. Biol. Chem.">
        <title>Orientation of bound ligands in mannose-binding proteins. Implications for multivalent ligand recognition.</title>
        <authorList>
            <person name="Ng K.K."/>
            <person name="Kolatkar A.R."/>
            <person name="Park-Snyder S."/>
            <person name="Feinberg H."/>
            <person name="Clark D.A."/>
            <person name="Drickamer K."/>
            <person name="Weis W.I."/>
        </authorList>
    </citation>
    <scope>X-RAY CRYSTALLOGRAPHY (1.90 ANGSTROMS) OF 90-238 IN COMPLEXES WITH CALCIUM AND CARBOHYDRATE</scope>
    <scope>FUNCTION</scope>
    <scope>SUBUNIT</scope>
    <scope>DOMAIN</scope>
    <scope>DISULFIDE BONDS</scope>
</reference>
<name>MBL1_RAT</name>
<protein>
    <recommendedName>
        <fullName>Mannose-binding protein A</fullName>
        <shortName evidence="15">MBP-A</shortName>
    </recommendedName>
    <alternativeName>
        <fullName>Mannan-binding protein</fullName>
    </alternativeName>
</protein>
<keyword id="KW-0002">3D-structure</keyword>
<keyword id="KW-0106">Calcium</keyword>
<keyword id="KW-0176">Collagen</keyword>
<keyword id="KW-1018">Complement activation lectin pathway</keyword>
<keyword id="KW-0180">Complement pathway</keyword>
<keyword id="KW-0903">Direct protein sequencing</keyword>
<keyword id="KW-1015">Disulfide bond</keyword>
<keyword id="KW-0325">Glycoprotein</keyword>
<keyword id="KW-0379">Hydroxylation</keyword>
<keyword id="KW-0391">Immunity</keyword>
<keyword id="KW-0399">Innate immunity</keyword>
<keyword id="KW-0430">Lectin</keyword>
<keyword id="KW-0465">Mannose-binding</keyword>
<keyword id="KW-0479">Metal-binding</keyword>
<keyword id="KW-1185">Reference proteome</keyword>
<keyword id="KW-0677">Repeat</keyword>
<keyword id="KW-0964">Secreted</keyword>
<keyword id="KW-0732">Signal</keyword>
<gene>
    <name type="primary">Mbl1</name>
</gene>
<evidence type="ECO:0000250" key="1"/>
<evidence type="ECO:0000255" key="2"/>
<evidence type="ECO:0000255" key="3">
    <source>
        <dbReference type="PROSITE-ProRule" id="PRU00040"/>
    </source>
</evidence>
<evidence type="ECO:0000256" key="4">
    <source>
        <dbReference type="SAM" id="MobiDB-lite"/>
    </source>
</evidence>
<evidence type="ECO:0000269" key="5">
    <source>
    </source>
</evidence>
<evidence type="ECO:0000269" key="6">
    <source>
    </source>
</evidence>
<evidence type="ECO:0000269" key="7">
    <source>
    </source>
</evidence>
<evidence type="ECO:0000269" key="8">
    <source>
    </source>
</evidence>
<evidence type="ECO:0000269" key="9">
    <source>
    </source>
</evidence>
<evidence type="ECO:0000269" key="10">
    <source>
    </source>
</evidence>
<evidence type="ECO:0000269" key="11">
    <source>
    </source>
</evidence>
<evidence type="ECO:0000269" key="12">
    <source>
    </source>
</evidence>
<evidence type="ECO:0000269" key="13">
    <source>
    </source>
</evidence>
<evidence type="ECO:0000269" key="14">
    <source>
    </source>
</evidence>
<evidence type="ECO:0000303" key="15">
    <source>
    </source>
</evidence>
<evidence type="ECO:0000305" key="16"/>
<evidence type="ECO:0007744" key="17">
    <source>
        <dbReference type="PDB" id="1AFA"/>
    </source>
</evidence>
<evidence type="ECO:0007744" key="18">
    <source>
        <dbReference type="PDB" id="1AFB"/>
    </source>
</evidence>
<evidence type="ECO:0007744" key="19">
    <source>
        <dbReference type="PDB" id="1AFD"/>
    </source>
</evidence>
<evidence type="ECO:0007744" key="20">
    <source>
        <dbReference type="PDB" id="1BCH"/>
    </source>
</evidence>
<evidence type="ECO:0007744" key="21">
    <source>
        <dbReference type="PDB" id="1BCJ"/>
    </source>
</evidence>
<evidence type="ECO:0007744" key="22">
    <source>
        <dbReference type="PDB" id="1BUU"/>
    </source>
</evidence>
<evidence type="ECO:0007744" key="23">
    <source>
        <dbReference type="PDB" id="1FIF"/>
    </source>
</evidence>
<evidence type="ECO:0007744" key="24">
    <source>
        <dbReference type="PDB" id="1FIH"/>
    </source>
</evidence>
<evidence type="ECO:0007744" key="25">
    <source>
        <dbReference type="PDB" id="1KMB"/>
    </source>
</evidence>
<evidence type="ECO:0007744" key="26">
    <source>
        <dbReference type="PDB" id="1KWT"/>
    </source>
</evidence>
<evidence type="ECO:0007744" key="27">
    <source>
        <dbReference type="PDB" id="1KWU"/>
    </source>
</evidence>
<evidence type="ECO:0007744" key="28">
    <source>
        <dbReference type="PDB" id="1KWV"/>
    </source>
</evidence>
<evidence type="ECO:0007744" key="29">
    <source>
        <dbReference type="PDB" id="1KWW"/>
    </source>
</evidence>
<evidence type="ECO:0007744" key="30">
    <source>
        <dbReference type="PDB" id="1KWX"/>
    </source>
</evidence>
<evidence type="ECO:0007744" key="31">
    <source>
        <dbReference type="PDB" id="1KWY"/>
    </source>
</evidence>
<evidence type="ECO:0007744" key="32">
    <source>
        <dbReference type="PDB" id="1KWZ"/>
    </source>
</evidence>
<evidence type="ECO:0007744" key="33">
    <source>
        <dbReference type="PDB" id="1KX0"/>
    </source>
</evidence>
<evidence type="ECO:0007744" key="34">
    <source>
        <dbReference type="PDB" id="1KX1"/>
    </source>
</evidence>
<evidence type="ECO:0007744" key="35">
    <source>
        <dbReference type="PDB" id="1MSB"/>
    </source>
</evidence>
<evidence type="ECO:0007744" key="36">
    <source>
        <dbReference type="PDB" id="1RTM"/>
    </source>
</evidence>
<evidence type="ECO:0007744" key="37">
    <source>
        <dbReference type="PDB" id="1YTT"/>
    </source>
</evidence>
<evidence type="ECO:0007744" key="38">
    <source>
        <dbReference type="PDB" id="2KMB"/>
    </source>
</evidence>
<evidence type="ECO:0007744" key="39">
    <source>
        <dbReference type="PDB" id="2MSB"/>
    </source>
</evidence>
<evidence type="ECO:0007744" key="40">
    <source>
        <dbReference type="PDB" id="3KMB"/>
    </source>
</evidence>
<evidence type="ECO:0007744" key="41">
    <source>
        <dbReference type="PDB" id="4KMB"/>
    </source>
</evidence>
<evidence type="ECO:0007829" key="42">
    <source>
        <dbReference type="PDB" id="1BUU"/>
    </source>
</evidence>
<evidence type="ECO:0007829" key="43">
    <source>
        <dbReference type="PDB" id="1RTM"/>
    </source>
</evidence>
<evidence type="ECO:0007829" key="44">
    <source>
        <dbReference type="PDB" id="2MSB"/>
    </source>
</evidence>
<proteinExistence type="evidence at protein level"/>
<feature type="signal peptide" evidence="11">
    <location>
        <begin position="1"/>
        <end position="17"/>
    </location>
</feature>
<feature type="chain" id="PRO_0000017414" description="Mannose-binding protein A">
    <location>
        <begin position="18"/>
        <end position="238"/>
    </location>
</feature>
<feature type="domain" description="Collagen-like">
    <location>
        <begin position="39"/>
        <end position="88"/>
    </location>
</feature>
<feature type="domain" description="C-type lectin" evidence="3">
    <location>
        <begin position="143"/>
        <end position="238"/>
    </location>
</feature>
<feature type="region of interest" description="Disordered" evidence="4">
    <location>
        <begin position="38"/>
        <end position="87"/>
    </location>
</feature>
<feature type="region of interest" description="Calcium-dependent carbohydrate binding" evidence="7 8 13">
    <location>
        <begin position="202"/>
        <end position="210"/>
    </location>
</feature>
<feature type="compositionally biased region" description="Basic and acidic residues" evidence="4">
    <location>
        <begin position="38"/>
        <end position="49"/>
    </location>
</feature>
<feature type="binding site" evidence="7 8 12 13 17 18 19 20 21 23 24 25 26 27 28 29 30 31 32 33 34 36 38 39 40 41">
    <location>
        <position position="178"/>
    </location>
    <ligand>
        <name>Ca(2+)</name>
        <dbReference type="ChEBI" id="CHEBI:29108"/>
        <label>1</label>
    </ligand>
</feature>
<feature type="binding site" evidence="7 8 12 13 17 18 19 20 21 23 24 25 26 27 28 29 30 31 32 33 34 36 38 39 40 41">
    <location>
        <position position="182"/>
    </location>
    <ligand>
        <name>Ca(2+)</name>
        <dbReference type="ChEBI" id="CHEBI:29108"/>
        <label>1</label>
    </ligand>
</feature>
<feature type="binding site" evidence="7 8 12 13 25 26 27 28 29 30 31 32 33 34 36 38 39 40 41">
    <location>
        <position position="202"/>
    </location>
    <ligand>
        <name>Ca(2+)</name>
        <dbReference type="ChEBI" id="CHEBI:29108"/>
        <label>2</label>
    </ligand>
</feature>
<feature type="binding site" evidence="7 8 12 13 25 26 27 28 29 30 31 32 33 34 36 38 39 40 41">
    <location>
        <position position="204"/>
    </location>
    <ligand>
        <name>Ca(2+)</name>
        <dbReference type="ChEBI" id="CHEBI:29108"/>
        <label>2</label>
    </ligand>
</feature>
<feature type="binding site" evidence="7 8 12 13 17 18 19 20 21 23 24 25 26 27 28 29 30 31 32 33 34 36 38 39 40 41">
    <location>
        <position position="205"/>
    </location>
    <ligand>
        <name>Ca(2+)</name>
        <dbReference type="ChEBI" id="CHEBI:29108"/>
        <label>1</label>
    </ligand>
</feature>
<feature type="binding site" evidence="7 8 12 13 17 18 19 20 21 23 24 25 26 27 28 29 30 31 32 33 34 36 38 39 40 41">
    <location>
        <position position="210"/>
    </location>
    <ligand>
        <name>Ca(2+)</name>
        <dbReference type="ChEBI" id="CHEBI:29108"/>
        <label>1</label>
    </ligand>
</feature>
<feature type="binding site" evidence="7 8 12 13 25 26 27 28 29 30 31 32 33 34 36 38 39 40 41">
    <location>
        <position position="210"/>
    </location>
    <ligand>
        <name>Ca(2+)</name>
        <dbReference type="ChEBI" id="CHEBI:29108"/>
        <label>2</label>
    </ligand>
</feature>
<feature type="binding site" evidence="7 8 12 13 17 18 19 20 21 23 24 25 26 27 28 29 30 31 32 33 34 36 38 39 40 41">
    <location>
        <position position="211"/>
    </location>
    <ligand>
        <name>Ca(2+)</name>
        <dbReference type="ChEBI" id="CHEBI:29108"/>
        <label>1</label>
    </ligand>
</feature>
<feature type="binding site" evidence="7 8 12 13 25 26 27 28 29 30 31 32 33 34 36 38 39 40 41">
    <location>
        <position position="222"/>
    </location>
    <ligand>
        <name>Ca(2+)</name>
        <dbReference type="ChEBI" id="CHEBI:29108"/>
        <label>2</label>
    </ligand>
</feature>
<feature type="binding site" evidence="7 8 12 13 25 26 27 28 29 30 31 32 33 34 36 38 39 40 41">
    <location>
        <position position="223"/>
    </location>
    <ligand>
        <name>Ca(2+)</name>
        <dbReference type="ChEBI" id="CHEBI:29108"/>
        <label>2</label>
    </ligand>
</feature>
<feature type="modified residue" description="4-hydroxyproline" evidence="2">
    <location>
        <position position="43"/>
    </location>
</feature>
<feature type="modified residue" description="5-hydroxylysine" evidence="5 10">
    <location>
        <position position="44"/>
    </location>
</feature>
<feature type="modified residue" description="5-hydroxylysine" evidence="5 10">
    <location>
        <position position="47"/>
    </location>
</feature>
<feature type="modified residue" description="4-hydroxyproline" evidence="10">
    <location>
        <position position="50"/>
    </location>
</feature>
<feature type="modified residue" description="4-hydroxyproline" evidence="2">
    <location>
        <position position="61"/>
    </location>
</feature>
<feature type="modified residue" description="4-hydroxyproline" evidence="2">
    <location>
        <position position="67"/>
    </location>
</feature>
<feature type="modified residue" description="4-hydroxyproline" evidence="2">
    <location>
        <position position="73"/>
    </location>
</feature>
<feature type="modified residue" description="4-hydroxyproline" evidence="2">
    <location>
        <position position="78"/>
    </location>
</feature>
<feature type="modified residue" description="5-hydroxylysine" evidence="10">
    <location>
        <position position="79"/>
    </location>
</feature>
<feature type="modified residue" description="5-hydroxylysine" evidence="10">
    <location>
        <position position="82"/>
    </location>
</feature>
<feature type="glycosylation site" description="O-linked (Gal...) hydroxylysine" evidence="5 10">
    <location>
        <position position="44"/>
    </location>
</feature>
<feature type="glycosylation site" description="O-linked (Gal...) hydroxylysine" evidence="5 10">
    <location>
        <position position="47"/>
    </location>
</feature>
<feature type="glycosylation site" description="O-linked (Gal...) hydroxylysine" evidence="10">
    <location>
        <position position="79"/>
    </location>
</feature>
<feature type="glycosylation site" description="O-linked (Gal...) hydroxylysine" evidence="10">
    <location>
        <position position="82"/>
    </location>
</feature>
<feature type="disulfide bond" evidence="8 9 12 14 17 18 19 20 21 22 23 24 25 26 27 28 29 30 31 32 33 34 35 36 37 38 39 40 41">
    <location>
        <begin position="145"/>
        <end position="234"/>
    </location>
</feature>
<feature type="disulfide bond" evidence="8 9 12 14 17 18 19 20 21 22 23 24 25 26 27 28 29 30 31 32 33 34 35 36 37 38 39 40 41">
    <location>
        <begin position="212"/>
        <end position="226"/>
    </location>
</feature>
<feature type="mutagenesis site" description="Prevents higher-order oligomer assembly. Slight reduction in secretion rate." evidence="5">
    <original>R</original>
    <variation>C</variation>
    <location>
        <position position="40"/>
    </location>
</feature>
<feature type="mutagenesis site" description="Disrupts homotrimer formation. 5-fold reduction in secretion rate. Prevents K-44 hydroxylation and glycosylation. 10-fold decrease in complement activation." evidence="5">
    <original>G</original>
    <variation>E</variation>
    <location>
        <position position="42"/>
    </location>
</feature>
<feature type="mutagenesis site" description="No effect on secretion rate, nor on homooligomer formation. 3-fold reduction in secretion rate; when associated with R-47. Prevents higher-order oligomer assembly; when associated with R-47. 10-fold decrease in complement activation; when associated with R-47." evidence="5">
    <original>K</original>
    <variation>R</variation>
    <location>
        <position position="44"/>
    </location>
</feature>
<feature type="mutagenesis site" description="Disrupts homotrimer formation. 5-fold reduction in secretion rate. Prevents K-47 hydroxylation and glycosylation." evidence="5">
    <original>G</original>
    <variation>D</variation>
    <location>
        <position position="45"/>
    </location>
</feature>
<feature type="mutagenesis site" description="No effect on secretion rate, nor on homooligomer formation. 3-fold reduction in secretion rate; when associated with R-44. Prevents higher-order oligomer assembly; when associated with R-44. 10-fold decrease in complement activation; when associated with R-44." evidence="5">
    <original>K</original>
    <variation>R</variation>
    <location>
        <position position="47"/>
    </location>
</feature>
<feature type="mutagenesis site" description="Changes carbohydrate binding specificity, leading to interaction with Lewis blood group antigens." evidence="13">
    <original>ASH</original>
    <variation>KKK</variation>
    <location>
        <begin position="228"/>
        <end position="230"/>
    </location>
</feature>
<feature type="sequence conflict" description="In Ref. 2; AAA98781." evidence="16" ref="2">
    <original>R</original>
    <variation>K</variation>
    <location>
        <position position="156"/>
    </location>
</feature>
<feature type="helix" evidence="43">
    <location>
        <begin position="91"/>
        <end position="119"/>
    </location>
</feature>
<feature type="strand" evidence="44">
    <location>
        <begin position="128"/>
        <end position="136"/>
    </location>
</feature>
<feature type="helix" evidence="44">
    <location>
        <begin position="138"/>
        <end position="147"/>
    </location>
</feature>
<feature type="strand" evidence="42">
    <location>
        <begin position="150"/>
        <end position="152"/>
    </location>
</feature>
<feature type="helix" evidence="44">
    <location>
        <begin position="158"/>
        <end position="168"/>
    </location>
</feature>
<feature type="strand" evidence="44">
    <location>
        <begin position="172"/>
        <end position="181"/>
    </location>
</feature>
<feature type="strand" evidence="44">
    <location>
        <begin position="184"/>
        <end position="187"/>
    </location>
</feature>
<feature type="strand" evidence="44">
    <location>
        <begin position="190"/>
        <end position="192"/>
    </location>
</feature>
<feature type="strand" evidence="42">
    <location>
        <begin position="198"/>
        <end position="202"/>
    </location>
</feature>
<feature type="strand" evidence="44">
    <location>
        <begin position="212"/>
        <end position="215"/>
    </location>
</feature>
<feature type="helix" evidence="43">
    <location>
        <begin position="217"/>
        <end position="219"/>
    </location>
</feature>
<feature type="strand" evidence="44">
    <location>
        <begin position="221"/>
        <end position="224"/>
    </location>
</feature>
<feature type="strand" evidence="44">
    <location>
        <begin position="230"/>
        <end position="236"/>
    </location>
</feature>
<sequence length="238" mass="25308">MLLLPLLVLLCVVSVSSSGSQTCEETLKTCSVIACGRDGRDGPKGEKGEPGQGLRGLQGPPGKLGPPGSVGAPGSQGPKGQKGDRGDSRAIEVKLANMEAEINTLKSKLELTNKLHAFSMGKKSGKKFFVTNHERMPFSKVKALCSELRGTVAIPRNAEENKAIQEVAKTSAFLGITDEVTEGQFMYVTGGRLTYSNWKKDEPNDHGSGEDCVTIVDNGLWNDISCQASHTAVCEFPA</sequence>
<comment type="function">
    <text evidence="1 7 8 11 13">Calcium-dependent lectin (PubMed:11850428, PubMed:1436090, PubMed:9033386). Plays a role in the innate immune response by binding mannose, fucose and N-acetylglucosamine moieties on different microorganisms and mediating activation of the lectin complement pathway (PubMed:3584121). Binds to late apoptotic cells, as well as to apoptotic blebs and to necrotic cells, but not to early apoptotic cells, facilitating their uptake by macrophages (By similarity).</text>
</comment>
<comment type="subunit">
    <text evidence="1 5 6 7 10 12 13">Homotrimer (PubMed:11850428, PubMed:25419660, PubMed:7704532, PubMed:9033386). Forms higher oligomeric complexes formed by the association of two, three or more homotrimers (PubMed:10903744, PubMed:25419660). Oligomerization occurs in the endoplasmic reticulum (By similarity). Interacts with MASP1 and MASP2 (PubMed:10913141).</text>
</comment>
<comment type="subcellular location">
    <subcellularLocation>
        <location evidence="5 10 11">Secreted</location>
    </subcellularLocation>
    <text>According to PubMed:10903744, long retention times in the endoplasmic reticulum and the Golgi apparatus that have been observed in former studies may reflect the abnormal physiology of the hepatoma cells used.</text>
</comment>
<comment type="tissue specificity">
    <text evidence="11">Detected in blood serum (at protein level).</text>
</comment>
<comment type="domain">
    <text evidence="7 12 13">The helical collagen-like domains from three protein chains assemble into a coiled coil and mediate trimerization.</text>
</comment>
<comment type="PTM">
    <text evidence="5 10">Hydroxylated on lysine and proline residues within the collagen-like domain.</text>
</comment>
<comment type="PTM">
    <text evidence="5 10">O-glycosylated. O-linked glycans on hydroxylysine residues consist of Glc-Gal disaccharides bound to the oxygen atom of post-translationally added hydroxyl groups.</text>
</comment>
<comment type="online information" name="Functional Glycomics Gateway - Glycan Binding">
    <link uri="http://www.functionalglycomics.org/glycomics/GBPServlet?&amp;operationType=view&amp;cbpId=cbp_rat_Ctlect_00135"/>
    <text>Mannose-binding protein A</text>
</comment>